<protein>
    <recommendedName>
        <fullName>Galectin-1</fullName>
        <shortName>Gal-1</shortName>
    </recommendedName>
    <alternativeName>
        <fullName>14 kDa laminin-binding protein</fullName>
        <shortName>HLBP14</shortName>
    </alternativeName>
    <alternativeName>
        <fullName>14 kDa lectin</fullName>
    </alternativeName>
    <alternativeName>
        <fullName>Beta-galactoside-binding lectin L-14-I</fullName>
    </alternativeName>
    <alternativeName>
        <fullName>Galaptin</fullName>
    </alternativeName>
    <alternativeName>
        <fullName>HBL</fullName>
    </alternativeName>
    <alternativeName>
        <fullName>HPL</fullName>
    </alternativeName>
    <alternativeName>
        <fullName>Lactose-binding lectin 1</fullName>
    </alternativeName>
    <alternativeName>
        <fullName>Lectin galactoside-binding soluble 1</fullName>
    </alternativeName>
    <alternativeName>
        <fullName>Putative MAPK-activating protein PM12</fullName>
    </alternativeName>
    <alternativeName>
        <fullName>S-Lac lectin 1</fullName>
    </alternativeName>
</protein>
<comment type="function">
    <text evidence="6 8 10 12 13">Lectin that binds beta-galactoside and a wide array of complex carbohydrates. Plays a role in regulating apoptosis, cell proliferation and cell differentiation. Inhibits CD45 protein phosphatase activity and therefore the dephosphorylation of Lyn kinase. Strong inducer of T-cell apoptosis. Plays a negative role in Th17 cell differentiation via activation of the receptor CD69 (PubMed:24752896).</text>
</comment>
<comment type="subunit">
    <text evidence="3 5 7 8 11 12 13 16">Homodimer. Binds LGALS3BP. Interacts with CD2, CD3, CD4, CD6, CD7, CD43, ALCAM and CD45. Interacts with laminin (via poly-N-acetyllactosamine). Interacts with SUSD2. Interacts with cargo receptor TMED10; the interaction mediates the translocation from the cytoplasm into the ERGIC (endoplasmic reticulum-Golgi intermediate compartment) and thereby secretion (PubMed:32272059). Interacts with CD69 (PubMed:24752896).</text>
</comment>
<comment type="interaction">
    <interactant intactId="EBI-1048875">
        <id>P09382</id>
    </interactant>
    <interactant intactId="EBI-1188108">
        <id>Q13740</id>
        <label>ALCAM</label>
    </interactant>
    <organismsDiffer>false</organismsDiffer>
    <experiments>5</experiments>
</comment>
<comment type="interaction">
    <interactant intactId="EBI-1048875">
        <id>P09382</id>
    </interactant>
    <interactant intactId="EBI-1222467">
        <id>P02649</id>
        <label>APOE</label>
    </interactant>
    <organismsDiffer>false</organismsDiffer>
    <experiments>3</experiments>
</comment>
<comment type="interaction">
    <interactant intactId="EBI-1048875">
        <id>P09382</id>
    </interactant>
    <interactant intactId="EBI-1049597">
        <id>P27797</id>
        <label>CALR</label>
    </interactant>
    <organismsDiffer>false</organismsDiffer>
    <experiments>3</experiments>
</comment>
<comment type="interaction">
    <interactant intactId="EBI-1048875">
        <id>P09382</id>
    </interactant>
    <interactant intactId="EBI-2873748">
        <id>P30203</id>
        <label>CD6</label>
    </interactant>
    <organismsDiffer>false</organismsDiffer>
    <experiments>2</experiments>
</comment>
<comment type="interaction">
    <interactant intactId="EBI-1048875">
        <id>P09382</id>
    </interactant>
    <interactant intactId="EBI-351007">
        <id>P36957</id>
        <label>DLST</label>
    </interactant>
    <organismsDiffer>false</organismsDiffer>
    <experiments>3</experiments>
</comment>
<comment type="interaction">
    <interactant intactId="EBI-1048875">
        <id>P09382</id>
    </interactant>
    <interactant intactId="EBI-2550768">
        <id>P26006</id>
        <label>ITGA3</label>
    </interactant>
    <organismsDiffer>false</organismsDiffer>
    <experiments>3</experiments>
</comment>
<comment type="interaction">
    <interactant intactId="EBI-1048875">
        <id>P09382</id>
    </interactant>
    <interactant intactId="EBI-1005487">
        <id>P35968</id>
        <label>KDR</label>
    </interactant>
    <organismsDiffer>false</organismsDiffer>
    <experiments>3</experiments>
</comment>
<comment type="interaction">
    <interactant intactId="EBI-1048875">
        <id>P09382</id>
    </interactant>
    <interactant intactId="EBI-1055945">
        <id>Q8TDX7</id>
        <label>NEK7</label>
    </interactant>
    <organismsDiffer>false</organismsDiffer>
    <experiments>3</experiments>
</comment>
<comment type="interaction">
    <interactant intactId="EBI-1048875">
        <id>P09382</id>
    </interactant>
    <interactant intactId="EBI-716404">
        <id>P16284</id>
        <label>PECAM1</label>
    </interactant>
    <organismsDiffer>false</organismsDiffer>
    <experiments>4</experiments>
</comment>
<comment type="interaction">
    <interactant intactId="EBI-1048875">
        <id>P09382</id>
    </interactant>
    <interactant intactId="EBI-1341">
        <id>P08575</id>
        <label>PTPRC</label>
    </interactant>
    <organismsDiffer>false</organismsDiffer>
    <experiments>2</experiments>
</comment>
<comment type="subcellular location">
    <subcellularLocation>
        <location evidence="6">Secreted</location>
        <location evidence="6">Extracellular space</location>
        <location evidence="6">Extracellular matrix</location>
    </subcellularLocation>
    <subcellularLocation>
        <location evidence="16">Cytoplasm</location>
    </subcellularLocation>
    <subcellularLocation>
        <location evidence="16">Secreted</location>
    </subcellularLocation>
    <text evidence="16">Can be secreted; the secretion is dependent on protein unfolding and facilitated by the cargo receptor TMED10; it results in protein translocation from the cytoplasm into the ERGIC (endoplasmic reticulum-Golgi intermediate compartment) followed by vesicle entry and secretion.</text>
</comment>
<comment type="tissue specificity">
    <text evidence="9 10">Expressed in placenta, maternal decidua and fetal membranes. Within placenta, expressed in trophoblasts, stromal cells, villous endothelium, syncytiotrophoblast apical membrane and villous stroma. Within fetal membranes, expressed in amnion, chorioamniotic mesenchyma and chorion (at protein level). Expressed in cardiac, smooth, and skeletal muscle, neurons, thymus, kidney and hematopoietic cells.</text>
</comment>
<comment type="online information" name="Functional Glycomics Gateway - Glycan Binding">
    <link uri="http://www.functionalglycomics.org/glycomics/GBPServlet?&amp;operationType=view&amp;cbpId=cbp_hum_Stlect_00116"/>
    <text>Galectin-1</text>
</comment>
<organism>
    <name type="scientific">Homo sapiens</name>
    <name type="common">Human</name>
    <dbReference type="NCBI Taxonomy" id="9606"/>
    <lineage>
        <taxon>Eukaryota</taxon>
        <taxon>Metazoa</taxon>
        <taxon>Chordata</taxon>
        <taxon>Craniata</taxon>
        <taxon>Vertebrata</taxon>
        <taxon>Euteleostomi</taxon>
        <taxon>Mammalia</taxon>
        <taxon>Eutheria</taxon>
        <taxon>Euarchontoglires</taxon>
        <taxon>Primates</taxon>
        <taxon>Haplorrhini</taxon>
        <taxon>Catarrhini</taxon>
        <taxon>Hominidae</taxon>
        <taxon>Homo</taxon>
    </lineage>
</organism>
<accession>P09382</accession>
<accession>B2R5E8</accession>
<accession>Q9UDK5</accession>
<keyword id="KW-0002">3D-structure</keyword>
<keyword id="KW-0007">Acetylation</keyword>
<keyword id="KW-0053">Apoptosis</keyword>
<keyword id="KW-0963">Cytoplasm</keyword>
<keyword id="KW-0903">Direct protein sequencing</keyword>
<keyword id="KW-0272">Extracellular matrix</keyword>
<keyword id="KW-0430">Lectin</keyword>
<keyword id="KW-0597">Phosphoprotein</keyword>
<keyword id="KW-1267">Proteomics identification</keyword>
<keyword id="KW-1185">Reference proteome</keyword>
<keyword id="KW-0964">Secreted</keyword>
<evidence type="ECO:0000250" key="1">
    <source>
        <dbReference type="UniProtKB" id="P16045"/>
    </source>
</evidence>
<evidence type="ECO:0000255" key="2">
    <source>
        <dbReference type="PROSITE-ProRule" id="PRU00639"/>
    </source>
</evidence>
<evidence type="ECO:0000269" key="3">
    <source>
    </source>
</evidence>
<evidence type="ECO:0000269" key="4">
    <source>
    </source>
</evidence>
<evidence type="ECO:0000269" key="5">
    <source>
    </source>
</evidence>
<evidence type="ECO:0000269" key="6">
    <source>
    </source>
</evidence>
<evidence type="ECO:0000269" key="7">
    <source>
    </source>
</evidence>
<evidence type="ECO:0000269" key="8">
    <source>
    </source>
</evidence>
<evidence type="ECO:0000269" key="9">
    <source>
    </source>
</evidence>
<evidence type="ECO:0000269" key="10">
    <source>
    </source>
</evidence>
<evidence type="ECO:0000269" key="11">
    <source>
    </source>
</evidence>
<evidence type="ECO:0000269" key="12">
    <source>
    </source>
</evidence>
<evidence type="ECO:0000269" key="13">
    <source>
    </source>
</evidence>
<evidence type="ECO:0000269" key="14">
    <source>
    </source>
</evidence>
<evidence type="ECO:0000269" key="15">
    <source>
    </source>
</evidence>
<evidence type="ECO:0000269" key="16">
    <source>
    </source>
</evidence>
<evidence type="ECO:0000269" key="17">
    <source ref="14"/>
</evidence>
<evidence type="ECO:0000312" key="18">
    <source>
        <dbReference type="HGNC" id="HGNC:6561"/>
    </source>
</evidence>
<evidence type="ECO:0007744" key="19">
    <source>
    </source>
</evidence>
<evidence type="ECO:0007744" key="20">
    <source>
    </source>
</evidence>
<evidence type="ECO:0007744" key="21">
    <source>
    </source>
</evidence>
<evidence type="ECO:0007744" key="22">
    <source>
    </source>
</evidence>
<evidence type="ECO:0007829" key="23">
    <source>
        <dbReference type="PDB" id="4Q27"/>
    </source>
</evidence>
<evidence type="ECO:0007829" key="24">
    <source>
        <dbReference type="PDB" id="4Y1U"/>
    </source>
</evidence>
<feature type="initiator methionine" description="Removed" evidence="4 15 17 20 21 22">
    <location>
        <position position="1"/>
    </location>
</feature>
<feature type="chain" id="PRO_0000076917" description="Galectin-1">
    <location>
        <begin position="2"/>
        <end position="135"/>
    </location>
</feature>
<feature type="domain" description="Galectin" evidence="2">
    <location>
        <begin position="4"/>
        <end position="135"/>
    </location>
</feature>
<feature type="binding site">
    <location>
        <begin position="45"/>
        <end position="49"/>
    </location>
    <ligand>
        <name>a beta-D-galactoside</name>
        <dbReference type="ChEBI" id="CHEBI:28034"/>
    </ligand>
</feature>
<feature type="binding site">
    <location>
        <position position="53"/>
    </location>
    <ligand>
        <name>a beta-D-galactoside</name>
        <dbReference type="ChEBI" id="CHEBI:28034"/>
    </ligand>
</feature>
<feature type="binding site">
    <location>
        <position position="62"/>
    </location>
    <ligand>
        <name>a beta-D-galactoside</name>
        <dbReference type="ChEBI" id="CHEBI:28034"/>
    </ligand>
</feature>
<feature type="binding site">
    <location>
        <begin position="69"/>
        <end position="72"/>
    </location>
    <ligand>
        <name>a beta-D-galactoside</name>
        <dbReference type="ChEBI" id="CHEBI:28034"/>
    </ligand>
</feature>
<feature type="modified residue" description="N-acetylalanine" evidence="20 21 22">
    <location>
        <position position="2"/>
    </location>
</feature>
<feature type="modified residue" description="N6-acetyllysine" evidence="1">
    <location>
        <position position="13"/>
    </location>
</feature>
<feature type="modified residue" description="N6-acetyllysine" evidence="19">
    <location>
        <position position="29"/>
    </location>
</feature>
<feature type="modified residue" description="Phosphoserine; by FAM20C" evidence="14">
    <location>
        <position position="30"/>
    </location>
</feature>
<feature type="modified residue" description="N6-acetyllysine; alternate" evidence="1">
    <location>
        <position position="108"/>
    </location>
</feature>
<feature type="modified residue" description="N6-succinyllysine; alternate" evidence="1">
    <location>
        <position position="108"/>
    </location>
</feature>
<feature type="modified residue" description="N6-acetyllysine" evidence="1">
    <location>
        <position position="128"/>
    </location>
</feature>
<feature type="strand" evidence="23">
    <location>
        <begin position="3"/>
        <end position="12"/>
    </location>
</feature>
<feature type="strand" evidence="23">
    <location>
        <begin position="18"/>
        <end position="24"/>
    </location>
</feature>
<feature type="strand" evidence="23">
    <location>
        <begin position="30"/>
        <end position="38"/>
    </location>
</feature>
<feature type="strand" evidence="23">
    <location>
        <begin position="41"/>
        <end position="52"/>
    </location>
</feature>
<feature type="strand" evidence="23">
    <location>
        <begin position="55"/>
        <end position="65"/>
    </location>
</feature>
<feature type="strand" evidence="24">
    <location>
        <begin position="73"/>
        <end position="76"/>
    </location>
</feature>
<feature type="strand" evidence="23">
    <location>
        <begin position="84"/>
        <end position="92"/>
    </location>
</feature>
<feature type="strand" evidence="23">
    <location>
        <begin position="94"/>
        <end position="100"/>
    </location>
</feature>
<feature type="helix" evidence="23">
    <location>
        <begin position="102"/>
        <end position="104"/>
    </location>
</feature>
<feature type="strand" evidence="23">
    <location>
        <begin position="106"/>
        <end position="110"/>
    </location>
</feature>
<feature type="strand" evidence="23">
    <location>
        <begin position="116"/>
        <end position="133"/>
    </location>
</feature>
<sequence length="135" mass="14716">MACGLVASNLNLKPGECLRVRGEVAPDAKSFVLNLGKDSNNLCLHFNPRFNAHGDANTIVCNSKDGGAWGTEQREAVFPFQPGSVAEVCITFDQANLTVKLPDGYEFKFPNRLNLEAINYMAADGDFKIKCVAFD</sequence>
<dbReference type="EMBL" id="X14829">
    <property type="protein sequence ID" value="CAA32938.1"/>
    <property type="molecule type" value="mRNA"/>
</dbReference>
<dbReference type="EMBL" id="J04456">
    <property type="protein sequence ID" value="AAA36170.1"/>
    <property type="molecule type" value="mRNA"/>
</dbReference>
<dbReference type="EMBL" id="X15256">
    <property type="protein sequence ID" value="CAA33328.1"/>
    <property type="molecule type" value="mRNA"/>
</dbReference>
<dbReference type="EMBL" id="EU363770">
    <property type="protein sequence ID" value="ACA58297.1"/>
    <property type="molecule type" value="mRNA"/>
</dbReference>
<dbReference type="EMBL" id="M57678">
    <property type="protein sequence ID" value="AAB00777.1"/>
    <property type="molecule type" value="Genomic_DNA"/>
</dbReference>
<dbReference type="EMBL" id="AB097036">
    <property type="protein sequence ID" value="BAC77389.1"/>
    <property type="molecule type" value="mRNA"/>
</dbReference>
<dbReference type="EMBL" id="CR456511">
    <property type="protein sequence ID" value="CAG30397.1"/>
    <property type="molecule type" value="mRNA"/>
</dbReference>
<dbReference type="EMBL" id="AK312161">
    <property type="protein sequence ID" value="BAG35095.1"/>
    <property type="molecule type" value="mRNA"/>
</dbReference>
<dbReference type="EMBL" id="BT006775">
    <property type="protein sequence ID" value="AAP35421.1"/>
    <property type="molecule type" value="mRNA"/>
</dbReference>
<dbReference type="EMBL" id="Z83844">
    <property type="status" value="NOT_ANNOTATED_CDS"/>
    <property type="molecule type" value="Genomic_DNA"/>
</dbReference>
<dbReference type="EMBL" id="CH471095">
    <property type="protein sequence ID" value="EAW60178.1"/>
    <property type="molecule type" value="Genomic_DNA"/>
</dbReference>
<dbReference type="EMBL" id="BC001693">
    <property type="protein sequence ID" value="AAH01693.1"/>
    <property type="molecule type" value="mRNA"/>
</dbReference>
<dbReference type="EMBL" id="BC020675">
    <property type="protein sequence ID" value="AAH20675.1"/>
    <property type="molecule type" value="mRNA"/>
</dbReference>
<dbReference type="CCDS" id="CCDS13954.1"/>
<dbReference type="PIR" id="A37134">
    <property type="entry name" value="LNHUGB"/>
</dbReference>
<dbReference type="RefSeq" id="NP_002296.1">
    <property type="nucleotide sequence ID" value="NM_002305.4"/>
</dbReference>
<dbReference type="PDB" id="1GZW">
    <property type="method" value="X-ray"/>
    <property type="resolution" value="1.70 A"/>
    <property type="chains" value="A/B=2-135"/>
</dbReference>
<dbReference type="PDB" id="1W6M">
    <property type="method" value="X-ray"/>
    <property type="resolution" value="2.30 A"/>
    <property type="chains" value="A/B=2-135"/>
</dbReference>
<dbReference type="PDB" id="1W6N">
    <property type="method" value="X-ray"/>
    <property type="resolution" value="1.65 A"/>
    <property type="chains" value="A/B=2-135"/>
</dbReference>
<dbReference type="PDB" id="1W6O">
    <property type="method" value="X-ray"/>
    <property type="resolution" value="1.90 A"/>
    <property type="chains" value="A/B=2-135"/>
</dbReference>
<dbReference type="PDB" id="1W6P">
    <property type="method" value="X-ray"/>
    <property type="resolution" value="1.80 A"/>
    <property type="chains" value="A/B=2-135"/>
</dbReference>
<dbReference type="PDB" id="1W6Q">
    <property type="method" value="X-ray"/>
    <property type="resolution" value="2.10 A"/>
    <property type="chains" value="A/B=2-135"/>
</dbReference>
<dbReference type="PDB" id="2KM2">
    <property type="method" value="NMR"/>
    <property type="chains" value="A/B=2-135"/>
</dbReference>
<dbReference type="PDB" id="2ZKN">
    <property type="method" value="X-ray"/>
    <property type="resolution" value="1.86 A"/>
    <property type="chains" value="A/B=2-135"/>
</dbReference>
<dbReference type="PDB" id="3OY8">
    <property type="method" value="X-ray"/>
    <property type="resolution" value="2.19 A"/>
    <property type="chains" value="A/B=2-135"/>
</dbReference>
<dbReference type="PDB" id="3OYW">
    <property type="method" value="X-ray"/>
    <property type="resolution" value="2.50 A"/>
    <property type="chains" value="A/B=2-135"/>
</dbReference>
<dbReference type="PDB" id="3T2T">
    <property type="method" value="X-ray"/>
    <property type="resolution" value="1.90 A"/>
    <property type="chains" value="A/B=1-135"/>
</dbReference>
<dbReference type="PDB" id="3W58">
    <property type="method" value="X-ray"/>
    <property type="resolution" value="1.58 A"/>
    <property type="chains" value="A/B/C/D=2-135"/>
</dbReference>
<dbReference type="PDB" id="3W59">
    <property type="method" value="X-ray"/>
    <property type="resolution" value="2.10 A"/>
    <property type="chains" value="A/B/C/D=2-135"/>
</dbReference>
<dbReference type="PDB" id="4Q1P">
    <property type="method" value="X-ray"/>
    <property type="resolution" value="1.46 A"/>
    <property type="chains" value="A/B=1-135"/>
</dbReference>
<dbReference type="PDB" id="4Q1R">
    <property type="method" value="X-ray"/>
    <property type="resolution" value="1.47 A"/>
    <property type="chains" value="A/B=1-135"/>
</dbReference>
<dbReference type="PDB" id="4Q26">
    <property type="method" value="X-ray"/>
    <property type="resolution" value="1.40 A"/>
    <property type="chains" value="A/B/G/H=1-135"/>
</dbReference>
<dbReference type="PDB" id="4Q27">
    <property type="method" value="X-ray"/>
    <property type="resolution" value="1.20 A"/>
    <property type="chains" value="A/B=1-135"/>
</dbReference>
<dbReference type="PDB" id="4Q2F">
    <property type="method" value="X-ray"/>
    <property type="resolution" value="1.40 A"/>
    <property type="chains" value="A/B=1-135"/>
</dbReference>
<dbReference type="PDB" id="4XBL">
    <property type="method" value="X-ray"/>
    <property type="resolution" value="1.93 A"/>
    <property type="chains" value="A/B=1-135"/>
</dbReference>
<dbReference type="PDB" id="4Y1U">
    <property type="method" value="X-ray"/>
    <property type="resolution" value="1.76 A"/>
    <property type="chains" value="A/B=3-135"/>
</dbReference>
<dbReference type="PDB" id="4Y1V">
    <property type="method" value="X-ray"/>
    <property type="resolution" value="2.32 A"/>
    <property type="chains" value="A/B=3-135"/>
</dbReference>
<dbReference type="PDB" id="4Y1X">
    <property type="method" value="X-ray"/>
    <property type="resolution" value="2.45 A"/>
    <property type="chains" value="A/B=3-135"/>
</dbReference>
<dbReference type="PDB" id="4Y1Y">
    <property type="method" value="X-ray"/>
    <property type="resolution" value="1.86 A"/>
    <property type="chains" value="A/B=4-135"/>
</dbReference>
<dbReference type="PDB" id="4Y1Z">
    <property type="method" value="X-ray"/>
    <property type="resolution" value="2.23 A"/>
    <property type="chains" value="A/B=3-135"/>
</dbReference>
<dbReference type="PDB" id="4Y20">
    <property type="method" value="X-ray"/>
    <property type="resolution" value="2.20 A"/>
    <property type="chains" value="A/B=3-135"/>
</dbReference>
<dbReference type="PDB" id="4Y22">
    <property type="method" value="X-ray"/>
    <property type="resolution" value="2.50 A"/>
    <property type="chains" value="A/B=3-135"/>
</dbReference>
<dbReference type="PDB" id="4Y24">
    <property type="method" value="X-ray"/>
    <property type="resolution" value="2.32 A"/>
    <property type="chains" value="A/B=3-135"/>
</dbReference>
<dbReference type="PDB" id="5MWT">
    <property type="method" value="X-ray"/>
    <property type="resolution" value="1.71 A"/>
    <property type="chains" value="A/B=3-135"/>
</dbReference>
<dbReference type="PDB" id="5MWX">
    <property type="method" value="X-ray"/>
    <property type="resolution" value="1.29 A"/>
    <property type="chains" value="A/B=3-135"/>
</dbReference>
<dbReference type="PDB" id="6B94">
    <property type="method" value="X-ray"/>
    <property type="resolution" value="1.80 A"/>
    <property type="chains" value="A/B=2-135"/>
</dbReference>
<dbReference type="PDB" id="6F83">
    <property type="method" value="X-ray"/>
    <property type="resolution" value="2.20 A"/>
    <property type="chains" value="A/B=2-135"/>
</dbReference>
<dbReference type="PDB" id="6M5Y">
    <property type="method" value="X-ray"/>
    <property type="resolution" value="1.38 A"/>
    <property type="chains" value="A=1-135"/>
</dbReference>
<dbReference type="PDB" id="7LTA">
    <property type="method" value="X-ray"/>
    <property type="resolution" value="1.53 A"/>
    <property type="chains" value="A/B=3-135"/>
</dbReference>
<dbReference type="PDB" id="7NML">
    <property type="method" value="X-ray"/>
    <property type="resolution" value="1.43 A"/>
    <property type="chains" value="A/B=3-135"/>
</dbReference>
<dbReference type="PDB" id="8B0W">
    <property type="method" value="X-ray"/>
    <property type="resolution" value="1.53 A"/>
    <property type="chains" value="A/B=3-135"/>
</dbReference>
<dbReference type="PDB" id="8B0Z">
    <property type="method" value="X-ray"/>
    <property type="resolution" value="1.23 A"/>
    <property type="chains" value="A/B=3-135"/>
</dbReference>
<dbReference type="PDB" id="8OJP">
    <property type="method" value="X-ray"/>
    <property type="resolution" value="1.71 A"/>
    <property type="chains" value="A/B=1-135"/>
</dbReference>
<dbReference type="PDB" id="8R74">
    <property type="method" value="X-ray"/>
    <property type="resolution" value="1.54 A"/>
    <property type="chains" value="A/B=1-135"/>
</dbReference>
<dbReference type="PDB" id="8RDC">
    <property type="method" value="X-ray"/>
    <property type="resolution" value="1.70 A"/>
    <property type="chains" value="A/B=1-135"/>
</dbReference>
<dbReference type="PDBsum" id="1GZW"/>
<dbReference type="PDBsum" id="1W6M"/>
<dbReference type="PDBsum" id="1W6N"/>
<dbReference type="PDBsum" id="1W6O"/>
<dbReference type="PDBsum" id="1W6P"/>
<dbReference type="PDBsum" id="1W6Q"/>
<dbReference type="PDBsum" id="2KM2"/>
<dbReference type="PDBsum" id="2ZKN"/>
<dbReference type="PDBsum" id="3OY8"/>
<dbReference type="PDBsum" id="3OYW"/>
<dbReference type="PDBsum" id="3T2T"/>
<dbReference type="PDBsum" id="3W58"/>
<dbReference type="PDBsum" id="3W59"/>
<dbReference type="PDBsum" id="4Q1P"/>
<dbReference type="PDBsum" id="4Q1R"/>
<dbReference type="PDBsum" id="4Q26"/>
<dbReference type="PDBsum" id="4Q27"/>
<dbReference type="PDBsum" id="4Q2F"/>
<dbReference type="PDBsum" id="4XBL"/>
<dbReference type="PDBsum" id="4Y1U"/>
<dbReference type="PDBsum" id="4Y1V"/>
<dbReference type="PDBsum" id="4Y1X"/>
<dbReference type="PDBsum" id="4Y1Y"/>
<dbReference type="PDBsum" id="4Y1Z"/>
<dbReference type="PDBsum" id="4Y20"/>
<dbReference type="PDBsum" id="4Y22"/>
<dbReference type="PDBsum" id="4Y24"/>
<dbReference type="PDBsum" id="5MWT"/>
<dbReference type="PDBsum" id="5MWX"/>
<dbReference type="PDBsum" id="6B94"/>
<dbReference type="PDBsum" id="6F83"/>
<dbReference type="PDBsum" id="6M5Y"/>
<dbReference type="PDBsum" id="7LTA"/>
<dbReference type="PDBsum" id="7NML"/>
<dbReference type="PDBsum" id="8B0W"/>
<dbReference type="PDBsum" id="8B0Z"/>
<dbReference type="PDBsum" id="8OJP"/>
<dbReference type="PDBsum" id="8R74"/>
<dbReference type="PDBsum" id="8RDC"/>
<dbReference type="BMRB" id="P09382"/>
<dbReference type="SMR" id="P09382"/>
<dbReference type="BioGRID" id="110147">
    <property type="interactions" value="338"/>
</dbReference>
<dbReference type="ComplexPortal" id="CPX-92">
    <property type="entry name" value="Galectin-1 complex"/>
</dbReference>
<dbReference type="CORUM" id="P09382"/>
<dbReference type="DIP" id="DIP-46153N"/>
<dbReference type="FunCoup" id="P09382">
    <property type="interactions" value="167"/>
</dbReference>
<dbReference type="IntAct" id="P09382">
    <property type="interactions" value="217"/>
</dbReference>
<dbReference type="MINT" id="P09382"/>
<dbReference type="STRING" id="9606.ENSP00000215909"/>
<dbReference type="BindingDB" id="P09382"/>
<dbReference type="ChEMBL" id="CHEMBL4915"/>
<dbReference type="DrugBank" id="DB04447">
    <property type="generic name" value="1,4-Dithiothreitol"/>
</dbReference>
<dbReference type="DrugBank" id="DB11638">
    <property type="generic name" value="Artenimol"/>
</dbReference>
<dbReference type="DrugBank" id="DB03345">
    <property type="generic name" value="Mercaptoethanol"/>
</dbReference>
<dbReference type="DrugBank" id="DB13123">
    <property type="generic name" value="OTX-008"/>
</dbReference>
<dbReference type="DrugBank" id="DB04396">
    <property type="generic name" value="Thiodigalactoside"/>
</dbReference>
<dbReference type="MoonDB" id="P09382">
    <property type="type" value="Curated"/>
</dbReference>
<dbReference type="UniLectin" id="P09382"/>
<dbReference type="GlyGen" id="P09382">
    <property type="glycosylation" value="4 sites, 1 N-linked glycan (1 site), 1 O-linked glycan (1 site)"/>
</dbReference>
<dbReference type="iPTMnet" id="P09382"/>
<dbReference type="MetOSite" id="P09382"/>
<dbReference type="PhosphoSitePlus" id="P09382"/>
<dbReference type="SwissPalm" id="P09382"/>
<dbReference type="BioMuta" id="LGALS1"/>
<dbReference type="DMDM" id="126155"/>
<dbReference type="REPRODUCTION-2DPAGE" id="IPI00219219"/>
<dbReference type="REPRODUCTION-2DPAGE" id="P09382"/>
<dbReference type="CPTAC" id="CPTAC-1436"/>
<dbReference type="CPTAC" id="CPTAC-1437"/>
<dbReference type="CPTAC" id="CPTAC-1438"/>
<dbReference type="CPTAC" id="CPTAC-1439"/>
<dbReference type="CPTAC" id="CPTAC-1440"/>
<dbReference type="CPTAC" id="CPTAC-5947"/>
<dbReference type="CPTAC" id="CPTAC-706"/>
<dbReference type="jPOST" id="P09382"/>
<dbReference type="MassIVE" id="P09382"/>
<dbReference type="PaxDb" id="9606-ENSP00000215909"/>
<dbReference type="PeptideAtlas" id="P09382"/>
<dbReference type="ProteomicsDB" id="52215"/>
<dbReference type="Pumba" id="P09382"/>
<dbReference type="TopDownProteomics" id="P09382"/>
<dbReference type="ABCD" id="P09382">
    <property type="antibodies" value="3 sequenced antibodies"/>
</dbReference>
<dbReference type="Antibodypedia" id="269">
    <property type="antibodies" value="1024 antibodies from 47 providers"/>
</dbReference>
<dbReference type="CPTC" id="P09382">
    <property type="antibodies" value="1 antibody"/>
</dbReference>
<dbReference type="DNASU" id="3956"/>
<dbReference type="Ensembl" id="ENST00000215909.10">
    <property type="protein sequence ID" value="ENSP00000215909.5"/>
    <property type="gene ID" value="ENSG00000100097.12"/>
</dbReference>
<dbReference type="GeneID" id="3956"/>
<dbReference type="KEGG" id="hsa:3956"/>
<dbReference type="MANE-Select" id="ENST00000215909.10">
    <property type="protein sequence ID" value="ENSP00000215909.5"/>
    <property type="RefSeq nucleotide sequence ID" value="NM_002305.4"/>
    <property type="RefSeq protein sequence ID" value="NP_002296.1"/>
</dbReference>
<dbReference type="UCSC" id="uc003atn.4">
    <property type="organism name" value="human"/>
</dbReference>
<dbReference type="AGR" id="HGNC:6561"/>
<dbReference type="CTD" id="3956"/>
<dbReference type="DisGeNET" id="3956"/>
<dbReference type="GeneCards" id="LGALS1"/>
<dbReference type="HGNC" id="HGNC:6561">
    <property type="gene designation" value="LGALS1"/>
</dbReference>
<dbReference type="HPA" id="ENSG00000100097">
    <property type="expression patterns" value="Low tissue specificity"/>
</dbReference>
<dbReference type="MIM" id="150570">
    <property type="type" value="gene"/>
</dbReference>
<dbReference type="neXtProt" id="NX_P09382"/>
<dbReference type="OpenTargets" id="ENSG00000100097"/>
<dbReference type="PharmGKB" id="PA30337"/>
<dbReference type="VEuPathDB" id="HostDB:ENSG00000100097"/>
<dbReference type="eggNOG" id="KOG3587">
    <property type="taxonomic scope" value="Eukaryota"/>
</dbReference>
<dbReference type="GeneTree" id="ENSGT00940000155534"/>
<dbReference type="HOGENOM" id="CLU_037794_5_0_1"/>
<dbReference type="InParanoid" id="P09382"/>
<dbReference type="OMA" id="IKCMAFE"/>
<dbReference type="OrthoDB" id="8443340at2759"/>
<dbReference type="PAN-GO" id="P09382">
    <property type="GO annotations" value="3 GO annotations based on evolutionary models"/>
</dbReference>
<dbReference type="PhylomeDB" id="P09382"/>
<dbReference type="TreeFam" id="TF315551"/>
<dbReference type="PathwayCommons" id="P09382"/>
<dbReference type="Reactome" id="R-HSA-381426">
    <property type="pathway name" value="Regulation of Insulin-like Growth Factor (IGF) transport and uptake by Insulin-like Growth Factor Binding Proteins (IGFBPs)"/>
</dbReference>
<dbReference type="Reactome" id="R-HSA-8957275">
    <property type="pathway name" value="Post-translational protein phosphorylation"/>
</dbReference>
<dbReference type="SignaLink" id="P09382"/>
<dbReference type="SIGNOR" id="P09382"/>
<dbReference type="BioGRID-ORCS" id="3956">
    <property type="hits" value="13 hits in 1162 CRISPR screens"/>
</dbReference>
<dbReference type="ChiTaRS" id="LGALS1">
    <property type="organism name" value="human"/>
</dbReference>
<dbReference type="EvolutionaryTrace" id="P09382"/>
<dbReference type="GeneWiki" id="Galectin-1"/>
<dbReference type="GeneWiki" id="LGALS1"/>
<dbReference type="GenomeRNAi" id="3956"/>
<dbReference type="Pharos" id="P09382">
    <property type="development level" value="Tchem"/>
</dbReference>
<dbReference type="PRO" id="PR:P09382"/>
<dbReference type="Proteomes" id="UP000005640">
    <property type="component" value="Chromosome 22"/>
</dbReference>
<dbReference type="RNAct" id="P09382">
    <property type="molecule type" value="protein"/>
</dbReference>
<dbReference type="Bgee" id="ENSG00000100097">
    <property type="expression patterns" value="Expressed in stromal cell of endometrium and 207 other cell types or tissues"/>
</dbReference>
<dbReference type="ExpressionAtlas" id="P09382">
    <property type="expression patterns" value="baseline and differential"/>
</dbReference>
<dbReference type="GO" id="GO:0062023">
    <property type="term" value="C:collagen-containing extracellular matrix"/>
    <property type="evidence" value="ECO:0007005"/>
    <property type="project" value="BHF-UCL"/>
</dbReference>
<dbReference type="GO" id="GO:0005737">
    <property type="term" value="C:cytoplasm"/>
    <property type="evidence" value="ECO:0000304"/>
    <property type="project" value="UniProtKB"/>
</dbReference>
<dbReference type="GO" id="GO:0005829">
    <property type="term" value="C:cytosol"/>
    <property type="evidence" value="ECO:0000314"/>
    <property type="project" value="HPA"/>
</dbReference>
<dbReference type="GO" id="GO:0005788">
    <property type="term" value="C:endoplasmic reticulum lumen"/>
    <property type="evidence" value="ECO:0000304"/>
    <property type="project" value="Reactome"/>
</dbReference>
<dbReference type="GO" id="GO:0070062">
    <property type="term" value="C:extracellular exosome"/>
    <property type="evidence" value="ECO:0007005"/>
    <property type="project" value="UniProtKB"/>
</dbReference>
<dbReference type="GO" id="GO:0005576">
    <property type="term" value="C:extracellular region"/>
    <property type="evidence" value="ECO:0007005"/>
    <property type="project" value="BHF-UCL"/>
</dbReference>
<dbReference type="GO" id="GO:0005615">
    <property type="term" value="C:extracellular space"/>
    <property type="evidence" value="ECO:0007005"/>
    <property type="project" value="BHF-UCL"/>
</dbReference>
<dbReference type="GO" id="GO:1990724">
    <property type="term" value="C:galectin complex"/>
    <property type="evidence" value="ECO:0000353"/>
    <property type="project" value="ComplexPortal"/>
</dbReference>
<dbReference type="GO" id="GO:0005886">
    <property type="term" value="C:plasma membrane"/>
    <property type="evidence" value="ECO:0000314"/>
    <property type="project" value="UniProt"/>
</dbReference>
<dbReference type="GO" id="GO:0030395">
    <property type="term" value="F:lactose binding"/>
    <property type="evidence" value="ECO:0000318"/>
    <property type="project" value="GO_Central"/>
</dbReference>
<dbReference type="GO" id="GO:0043236">
    <property type="term" value="F:laminin binding"/>
    <property type="evidence" value="ECO:0000318"/>
    <property type="project" value="GO_Central"/>
</dbReference>
<dbReference type="GO" id="GO:0048018">
    <property type="term" value="F:receptor ligand activity"/>
    <property type="evidence" value="ECO:0000314"/>
    <property type="project" value="UniProt"/>
</dbReference>
<dbReference type="GO" id="GO:0003723">
    <property type="term" value="F:RNA binding"/>
    <property type="evidence" value="ECO:0007005"/>
    <property type="project" value="UniProtKB"/>
</dbReference>
<dbReference type="GO" id="GO:0006915">
    <property type="term" value="P:apoptotic process"/>
    <property type="evidence" value="ECO:0000304"/>
    <property type="project" value="ProtInc"/>
</dbReference>
<dbReference type="GO" id="GO:0098609">
    <property type="term" value="P:cell-cell adhesion"/>
    <property type="evidence" value="ECO:0000314"/>
    <property type="project" value="ComplexPortal"/>
</dbReference>
<dbReference type="GO" id="GO:0045445">
    <property type="term" value="P:myoblast differentiation"/>
    <property type="evidence" value="ECO:0007669"/>
    <property type="project" value="Ensembl"/>
</dbReference>
<dbReference type="GO" id="GO:2000329">
    <property type="term" value="P:negative regulation of T-helper 17 cell lineage commitment"/>
    <property type="evidence" value="ECO:0000314"/>
    <property type="project" value="UniProt"/>
</dbReference>
<dbReference type="GO" id="GO:0002317">
    <property type="term" value="P:plasma cell differentiation"/>
    <property type="evidence" value="ECO:0007669"/>
    <property type="project" value="Ensembl"/>
</dbReference>
<dbReference type="GO" id="GO:0043065">
    <property type="term" value="P:positive regulation of apoptotic process"/>
    <property type="evidence" value="ECO:0000314"/>
    <property type="project" value="ComplexPortal"/>
</dbReference>
<dbReference type="GO" id="GO:0043123">
    <property type="term" value="P:positive regulation of canonical NF-kappaB signal transduction"/>
    <property type="evidence" value="ECO:0007001"/>
    <property type="project" value="UniProtKB"/>
</dbReference>
<dbReference type="GO" id="GO:0050729">
    <property type="term" value="P:positive regulation of inflammatory response"/>
    <property type="evidence" value="ECO:0000314"/>
    <property type="project" value="ComplexPortal"/>
</dbReference>
<dbReference type="GO" id="GO:0046598">
    <property type="term" value="P:positive regulation of viral entry into host cell"/>
    <property type="evidence" value="ECO:0000314"/>
    <property type="project" value="UniProtKB"/>
</dbReference>
<dbReference type="GO" id="GO:0042981">
    <property type="term" value="P:regulation of apoptotic process"/>
    <property type="evidence" value="ECO:0000304"/>
    <property type="project" value="UniProtKB"/>
</dbReference>
<dbReference type="GO" id="GO:0031295">
    <property type="term" value="P:T cell costimulation"/>
    <property type="evidence" value="ECO:0007669"/>
    <property type="project" value="Ensembl"/>
</dbReference>
<dbReference type="CDD" id="cd00070">
    <property type="entry name" value="GLECT"/>
    <property type="match status" value="1"/>
</dbReference>
<dbReference type="FunFam" id="2.60.120.200:FF:000021">
    <property type="entry name" value="Galectin"/>
    <property type="match status" value="1"/>
</dbReference>
<dbReference type="Gene3D" id="2.60.120.200">
    <property type="match status" value="1"/>
</dbReference>
<dbReference type="InterPro" id="IPR013320">
    <property type="entry name" value="ConA-like_dom_sf"/>
</dbReference>
<dbReference type="InterPro" id="IPR044156">
    <property type="entry name" value="Galectin-like"/>
</dbReference>
<dbReference type="InterPro" id="IPR001079">
    <property type="entry name" value="Galectin_CRD"/>
</dbReference>
<dbReference type="PANTHER" id="PTHR11346">
    <property type="entry name" value="GALECTIN"/>
    <property type="match status" value="1"/>
</dbReference>
<dbReference type="PANTHER" id="PTHR11346:SF97">
    <property type="entry name" value="GALECTIN-1"/>
    <property type="match status" value="1"/>
</dbReference>
<dbReference type="Pfam" id="PF00337">
    <property type="entry name" value="Gal-bind_lectin"/>
    <property type="match status" value="1"/>
</dbReference>
<dbReference type="SMART" id="SM00908">
    <property type="entry name" value="Gal-bind_lectin"/>
    <property type="match status" value="1"/>
</dbReference>
<dbReference type="SMART" id="SM00276">
    <property type="entry name" value="GLECT"/>
    <property type="match status" value="1"/>
</dbReference>
<dbReference type="SUPFAM" id="SSF49899">
    <property type="entry name" value="Concanavalin A-like lectins/glucanases"/>
    <property type="match status" value="1"/>
</dbReference>
<dbReference type="PROSITE" id="PS51304">
    <property type="entry name" value="GALECTIN"/>
    <property type="match status" value="1"/>
</dbReference>
<proteinExistence type="evidence at protein level"/>
<reference key="1">
    <citation type="journal article" date="1989" name="Biochim. Biophys. Acta">
        <title>Cloning and nucleotide sequence of a full-length cDNA for human 14 kDa beta-galactoside-binding lectin.</title>
        <authorList>
            <person name="Hirabayashi J."/>
            <person name="Ayaki K."/>
            <person name="Soma G."/>
            <person name="Kasai K."/>
        </authorList>
    </citation>
    <scope>NUCLEOTIDE SEQUENCE [MRNA]</scope>
    <source>
        <tissue>Lung</tissue>
    </source>
</reference>
<reference key="2">
    <citation type="journal article" date="1989" name="J. Biol. Chem.">
        <title>Molecular cloning, characterization, and expression of a human 14-kDa lectin.</title>
        <authorList>
            <person name="Couraud P.-O."/>
            <person name="Casentini-Borocz D."/>
            <person name="Bringman T.S."/>
            <person name="Griffith J."/>
            <person name="McGrogan M."/>
            <person name="Nedwin G.E."/>
        </authorList>
    </citation>
    <scope>NUCLEOTIDE SEQUENCE [MRNA]</scope>
    <source>
        <tissue>Placenta</tissue>
        <tissue>Promyelocytic leukemia</tissue>
    </source>
</reference>
<reference key="3">
    <citation type="journal article" date="1989" name="Biochem. J.">
        <title>Evidence that the 14 kDa soluble beta-galactoside-binding lectin in man is encoded by a single gene.</title>
        <authorList>
            <person name="Abbott W.M."/>
            <person name="Feizi T."/>
        </authorList>
    </citation>
    <scope>NUCLEOTIDE SEQUENCE [MRNA]</scope>
    <source>
        <tissue>Hepatoma</tissue>
    </source>
</reference>
<reference key="4">
    <citation type="journal article" date="2008" name="Proc. Natl. Acad. Sci. U.S.A.">
        <title>Emergence of hormonal and redox regulation of galectin-1 in placental mammals: implication in maternal-fetal immune tolerance.</title>
        <authorList>
            <person name="Than N.G."/>
            <person name="Romero R."/>
            <person name="Erez O."/>
            <person name="Weckle A."/>
            <person name="Tarca A.L."/>
            <person name="Hotra J."/>
            <person name="Abbas A."/>
            <person name="Han Y.M."/>
            <person name="Kim S.S."/>
            <person name="Kusanovic J.P."/>
            <person name="Gotsch F."/>
            <person name="Hou Z."/>
            <person name="Santolaya-Forgas J."/>
            <person name="Benirschke K."/>
            <person name="Papp Z."/>
            <person name="Grossman L.I."/>
            <person name="Goodman M."/>
            <person name="Wildman D.E."/>
        </authorList>
    </citation>
    <scope>NUCLEOTIDE SEQUENCE [MRNA]</scope>
    <scope>TISSUE SPECIFICITY</scope>
    <source>
        <tissue>Placenta</tissue>
    </source>
</reference>
<reference key="5">
    <citation type="journal article" date="1991" name="Biochemistry">
        <title>Genomic sequence and organization of two members of a human lectin gene family.</title>
        <authorList>
            <person name="Gitt M.A."/>
            <person name="Barondes S.H."/>
        </authorList>
    </citation>
    <scope>NUCLEOTIDE SEQUENCE [GENOMIC DNA]</scope>
    <source>
        <tissue>Lymphocyte</tissue>
    </source>
</reference>
<reference key="6">
    <citation type="journal article" date="2003" name="Oncogene">
        <title>Large-scale identification and characterization of human genes that activate NF-kappaB and MAPK signaling pathways.</title>
        <authorList>
            <person name="Matsuda A."/>
            <person name="Suzuki Y."/>
            <person name="Honda G."/>
            <person name="Muramatsu S."/>
            <person name="Matsuzaki O."/>
            <person name="Nagano Y."/>
            <person name="Doi T."/>
            <person name="Shimotohno K."/>
            <person name="Harada T."/>
            <person name="Nishida E."/>
            <person name="Hayashi H."/>
            <person name="Sugano S."/>
        </authorList>
    </citation>
    <scope>NUCLEOTIDE SEQUENCE [LARGE SCALE MRNA]</scope>
    <source>
        <tissue>Lung fibroblast</tissue>
    </source>
</reference>
<reference key="7">
    <citation type="journal article" date="2004" name="Genome Biol.">
        <title>A genome annotation-driven approach to cloning the human ORFeome.</title>
        <authorList>
            <person name="Collins J.E."/>
            <person name="Wright C.L."/>
            <person name="Edwards C.A."/>
            <person name="Davis M.P."/>
            <person name="Grinham J.A."/>
            <person name="Cole C.G."/>
            <person name="Goward M.E."/>
            <person name="Aguado B."/>
            <person name="Mallya M."/>
            <person name="Mokrab Y."/>
            <person name="Huckle E.J."/>
            <person name="Beare D.M."/>
            <person name="Dunham I."/>
        </authorList>
    </citation>
    <scope>NUCLEOTIDE SEQUENCE [LARGE SCALE MRNA]</scope>
</reference>
<reference key="8">
    <citation type="journal article" date="2004" name="Nat. Genet.">
        <title>Complete sequencing and characterization of 21,243 full-length human cDNAs.</title>
        <authorList>
            <person name="Ota T."/>
            <person name="Suzuki Y."/>
            <person name="Nishikawa T."/>
            <person name="Otsuki T."/>
            <person name="Sugiyama T."/>
            <person name="Irie R."/>
            <person name="Wakamatsu A."/>
            <person name="Hayashi K."/>
            <person name="Sato H."/>
            <person name="Nagai K."/>
            <person name="Kimura K."/>
            <person name="Makita H."/>
            <person name="Sekine M."/>
            <person name="Obayashi M."/>
            <person name="Nishi T."/>
            <person name="Shibahara T."/>
            <person name="Tanaka T."/>
            <person name="Ishii S."/>
            <person name="Yamamoto J."/>
            <person name="Saito K."/>
            <person name="Kawai Y."/>
            <person name="Isono Y."/>
            <person name="Nakamura Y."/>
            <person name="Nagahari K."/>
            <person name="Murakami K."/>
            <person name="Yasuda T."/>
            <person name="Iwayanagi T."/>
            <person name="Wagatsuma M."/>
            <person name="Shiratori A."/>
            <person name="Sudo H."/>
            <person name="Hosoiri T."/>
            <person name="Kaku Y."/>
            <person name="Kodaira H."/>
            <person name="Kondo H."/>
            <person name="Sugawara M."/>
            <person name="Takahashi M."/>
            <person name="Kanda K."/>
            <person name="Yokoi T."/>
            <person name="Furuya T."/>
            <person name="Kikkawa E."/>
            <person name="Omura Y."/>
            <person name="Abe K."/>
            <person name="Kamihara K."/>
            <person name="Katsuta N."/>
            <person name="Sato K."/>
            <person name="Tanikawa M."/>
            <person name="Yamazaki M."/>
            <person name="Ninomiya K."/>
            <person name="Ishibashi T."/>
            <person name="Yamashita H."/>
            <person name="Murakawa K."/>
            <person name="Fujimori K."/>
            <person name="Tanai H."/>
            <person name="Kimata M."/>
            <person name="Watanabe M."/>
            <person name="Hiraoka S."/>
            <person name="Chiba Y."/>
            <person name="Ishida S."/>
            <person name="Ono Y."/>
            <person name="Takiguchi S."/>
            <person name="Watanabe S."/>
            <person name="Yosida M."/>
            <person name="Hotuta T."/>
            <person name="Kusano J."/>
            <person name="Kanehori K."/>
            <person name="Takahashi-Fujii A."/>
            <person name="Hara H."/>
            <person name="Tanase T.-O."/>
            <person name="Nomura Y."/>
            <person name="Togiya S."/>
            <person name="Komai F."/>
            <person name="Hara R."/>
            <person name="Takeuchi K."/>
            <person name="Arita M."/>
            <person name="Imose N."/>
            <person name="Musashino K."/>
            <person name="Yuuki H."/>
            <person name="Oshima A."/>
            <person name="Sasaki N."/>
            <person name="Aotsuka S."/>
            <person name="Yoshikawa Y."/>
            <person name="Matsunawa H."/>
            <person name="Ichihara T."/>
            <person name="Shiohata N."/>
            <person name="Sano S."/>
            <person name="Moriya S."/>
            <person name="Momiyama H."/>
            <person name="Satoh N."/>
            <person name="Takami S."/>
            <person name="Terashima Y."/>
            <person name="Suzuki O."/>
            <person name="Nakagawa S."/>
            <person name="Senoh A."/>
            <person name="Mizoguchi H."/>
            <person name="Goto Y."/>
            <person name="Shimizu F."/>
            <person name="Wakebe H."/>
            <person name="Hishigaki H."/>
            <person name="Watanabe T."/>
            <person name="Sugiyama A."/>
            <person name="Takemoto M."/>
            <person name="Kawakami B."/>
            <person name="Yamazaki M."/>
            <person name="Watanabe K."/>
            <person name="Kumagai A."/>
            <person name="Itakura S."/>
            <person name="Fukuzumi Y."/>
            <person name="Fujimori Y."/>
            <person name="Komiyama M."/>
            <person name="Tashiro H."/>
            <person name="Tanigami A."/>
            <person name="Fujiwara T."/>
            <person name="Ono T."/>
            <person name="Yamada K."/>
            <person name="Fujii Y."/>
            <person name="Ozaki K."/>
            <person name="Hirao M."/>
            <person name="Ohmori Y."/>
            <person name="Kawabata A."/>
            <person name="Hikiji T."/>
            <person name="Kobatake N."/>
            <person name="Inagaki H."/>
            <person name="Ikema Y."/>
            <person name="Okamoto S."/>
            <person name="Okitani R."/>
            <person name="Kawakami T."/>
            <person name="Noguchi S."/>
            <person name="Itoh T."/>
            <person name="Shigeta K."/>
            <person name="Senba T."/>
            <person name="Matsumura K."/>
            <person name="Nakajima Y."/>
            <person name="Mizuno T."/>
            <person name="Morinaga M."/>
            <person name="Sasaki M."/>
            <person name="Togashi T."/>
            <person name="Oyama M."/>
            <person name="Hata H."/>
            <person name="Watanabe M."/>
            <person name="Komatsu T."/>
            <person name="Mizushima-Sugano J."/>
            <person name="Satoh T."/>
            <person name="Shirai Y."/>
            <person name="Takahashi Y."/>
            <person name="Nakagawa K."/>
            <person name="Okumura K."/>
            <person name="Nagase T."/>
            <person name="Nomura N."/>
            <person name="Kikuchi H."/>
            <person name="Masuho Y."/>
            <person name="Yamashita R."/>
            <person name="Nakai K."/>
            <person name="Yada T."/>
            <person name="Nakamura Y."/>
            <person name="Ohara O."/>
            <person name="Isogai T."/>
            <person name="Sugano S."/>
        </authorList>
    </citation>
    <scope>NUCLEOTIDE SEQUENCE [LARGE SCALE MRNA]</scope>
    <source>
        <tissue>Thalamus</tissue>
    </source>
</reference>
<reference key="9">
    <citation type="submission" date="2003-05" db="EMBL/GenBank/DDBJ databases">
        <title>Cloning of human full-length CDSs in BD Creator(TM) system donor vector.</title>
        <authorList>
            <person name="Kalnine N."/>
            <person name="Chen X."/>
            <person name="Rolfs A."/>
            <person name="Halleck A."/>
            <person name="Hines L."/>
            <person name="Eisenstein S."/>
            <person name="Koundinya M."/>
            <person name="Raphael J."/>
            <person name="Moreira D."/>
            <person name="Kelley T."/>
            <person name="LaBaer J."/>
            <person name="Lin Y."/>
            <person name="Phelan M."/>
            <person name="Farmer A."/>
        </authorList>
    </citation>
    <scope>NUCLEOTIDE SEQUENCE [LARGE SCALE MRNA]</scope>
</reference>
<reference key="10">
    <citation type="journal article" date="1999" name="Nature">
        <title>The DNA sequence of human chromosome 22.</title>
        <authorList>
            <person name="Dunham I."/>
            <person name="Hunt A.R."/>
            <person name="Collins J.E."/>
            <person name="Bruskiewich R."/>
            <person name="Beare D.M."/>
            <person name="Clamp M."/>
            <person name="Smink L.J."/>
            <person name="Ainscough R."/>
            <person name="Almeida J.P."/>
            <person name="Babbage A.K."/>
            <person name="Bagguley C."/>
            <person name="Bailey J."/>
            <person name="Barlow K.F."/>
            <person name="Bates K.N."/>
            <person name="Beasley O.P."/>
            <person name="Bird C.P."/>
            <person name="Blakey S.E."/>
            <person name="Bridgeman A.M."/>
            <person name="Buck D."/>
            <person name="Burgess J."/>
            <person name="Burrill W.D."/>
            <person name="Burton J."/>
            <person name="Carder C."/>
            <person name="Carter N.P."/>
            <person name="Chen Y."/>
            <person name="Clark G."/>
            <person name="Clegg S.M."/>
            <person name="Cobley V.E."/>
            <person name="Cole C.G."/>
            <person name="Collier R.E."/>
            <person name="Connor R."/>
            <person name="Conroy D."/>
            <person name="Corby N.R."/>
            <person name="Coville G.J."/>
            <person name="Cox A.V."/>
            <person name="Davis J."/>
            <person name="Dawson E."/>
            <person name="Dhami P.D."/>
            <person name="Dockree C."/>
            <person name="Dodsworth S.J."/>
            <person name="Durbin R.M."/>
            <person name="Ellington A.G."/>
            <person name="Evans K.L."/>
            <person name="Fey J.M."/>
            <person name="Fleming K."/>
            <person name="French L."/>
            <person name="Garner A.A."/>
            <person name="Gilbert J.G.R."/>
            <person name="Goward M.E."/>
            <person name="Grafham D.V."/>
            <person name="Griffiths M.N.D."/>
            <person name="Hall C."/>
            <person name="Hall R.E."/>
            <person name="Hall-Tamlyn G."/>
            <person name="Heathcott R.W."/>
            <person name="Ho S."/>
            <person name="Holmes S."/>
            <person name="Hunt S.E."/>
            <person name="Jones M.C."/>
            <person name="Kershaw J."/>
            <person name="Kimberley A.M."/>
            <person name="King A."/>
            <person name="Laird G.K."/>
            <person name="Langford C.F."/>
            <person name="Leversha M.A."/>
            <person name="Lloyd C."/>
            <person name="Lloyd D.M."/>
            <person name="Martyn I.D."/>
            <person name="Mashreghi-Mohammadi M."/>
            <person name="Matthews L.H."/>
            <person name="Mccann O.T."/>
            <person name="Mcclay J."/>
            <person name="Mclaren S."/>
            <person name="McMurray A.A."/>
            <person name="Milne S.A."/>
            <person name="Mortimore B.J."/>
            <person name="Odell C.N."/>
            <person name="Pavitt R."/>
            <person name="Pearce A.V."/>
            <person name="Pearson D."/>
            <person name="Phillimore B.J.C.T."/>
            <person name="Phillips S.H."/>
            <person name="Plumb R.W."/>
            <person name="Ramsay H."/>
            <person name="Ramsey Y."/>
            <person name="Rogers L."/>
            <person name="Ross M.T."/>
            <person name="Scott C.E."/>
            <person name="Sehra H.K."/>
            <person name="Skuce C.D."/>
            <person name="Smalley S."/>
            <person name="Smith M.L."/>
            <person name="Soderlund C."/>
            <person name="Spragon L."/>
            <person name="Steward C.A."/>
            <person name="Sulston J.E."/>
            <person name="Swann R.M."/>
            <person name="Vaudin M."/>
            <person name="Wall M."/>
            <person name="Wallis J.M."/>
            <person name="Whiteley M.N."/>
            <person name="Willey D.L."/>
            <person name="Williams L."/>
            <person name="Williams S.A."/>
            <person name="Williamson H."/>
            <person name="Wilmer T.E."/>
            <person name="Wilming L."/>
            <person name="Wright C.L."/>
            <person name="Hubbard T."/>
            <person name="Bentley D.R."/>
            <person name="Beck S."/>
            <person name="Rogers J."/>
            <person name="Shimizu N."/>
            <person name="Minoshima S."/>
            <person name="Kawasaki K."/>
            <person name="Sasaki T."/>
            <person name="Asakawa S."/>
            <person name="Kudoh J."/>
            <person name="Shintani A."/>
            <person name="Shibuya K."/>
            <person name="Yoshizaki Y."/>
            <person name="Aoki N."/>
            <person name="Mitsuyama S."/>
            <person name="Roe B.A."/>
            <person name="Chen F."/>
            <person name="Chu L."/>
            <person name="Crabtree J."/>
            <person name="Deschamps S."/>
            <person name="Do A."/>
            <person name="Do T."/>
            <person name="Dorman A."/>
            <person name="Fang F."/>
            <person name="Fu Y."/>
            <person name="Hu P."/>
            <person name="Hua A."/>
            <person name="Kenton S."/>
            <person name="Lai H."/>
            <person name="Lao H.I."/>
            <person name="Lewis J."/>
            <person name="Lewis S."/>
            <person name="Lin S.-P."/>
            <person name="Loh P."/>
            <person name="Malaj E."/>
            <person name="Nguyen T."/>
            <person name="Pan H."/>
            <person name="Phan S."/>
            <person name="Qi S."/>
            <person name="Qian Y."/>
            <person name="Ray L."/>
            <person name="Ren Q."/>
            <person name="Shaull S."/>
            <person name="Sloan D."/>
            <person name="Song L."/>
            <person name="Wang Q."/>
            <person name="Wang Y."/>
            <person name="Wang Z."/>
            <person name="White J."/>
            <person name="Willingham D."/>
            <person name="Wu H."/>
            <person name="Yao Z."/>
            <person name="Zhan M."/>
            <person name="Zhang G."/>
            <person name="Chissoe S."/>
            <person name="Murray J."/>
            <person name="Miller N."/>
            <person name="Minx P."/>
            <person name="Fulton R."/>
            <person name="Johnson D."/>
            <person name="Bemis G."/>
            <person name="Bentley D."/>
            <person name="Bradshaw H."/>
            <person name="Bourne S."/>
            <person name="Cordes M."/>
            <person name="Du Z."/>
            <person name="Fulton L."/>
            <person name="Goela D."/>
            <person name="Graves T."/>
            <person name="Hawkins J."/>
            <person name="Hinds K."/>
            <person name="Kemp K."/>
            <person name="Latreille P."/>
            <person name="Layman D."/>
            <person name="Ozersky P."/>
            <person name="Rohlfing T."/>
            <person name="Scheet P."/>
            <person name="Walker C."/>
            <person name="Wamsley A."/>
            <person name="Wohldmann P."/>
            <person name="Pepin K."/>
            <person name="Nelson J."/>
            <person name="Korf I."/>
            <person name="Bedell J.A."/>
            <person name="Hillier L.W."/>
            <person name="Mardis E."/>
            <person name="Waterston R."/>
            <person name="Wilson R."/>
            <person name="Emanuel B.S."/>
            <person name="Shaikh T."/>
            <person name="Kurahashi H."/>
            <person name="Saitta S."/>
            <person name="Budarf M.L."/>
            <person name="McDermid H.E."/>
            <person name="Johnson A."/>
            <person name="Wong A.C.C."/>
            <person name="Morrow B.E."/>
            <person name="Edelmann L."/>
            <person name="Kim U.J."/>
            <person name="Shizuya H."/>
            <person name="Simon M.I."/>
            <person name="Dumanski J.P."/>
            <person name="Peyrard M."/>
            <person name="Kedra D."/>
            <person name="Seroussi E."/>
            <person name="Fransson I."/>
            <person name="Tapia I."/>
            <person name="Bruder C.E."/>
            <person name="O'Brien K.P."/>
            <person name="Wilkinson P."/>
            <person name="Bodenteich A."/>
            <person name="Hartman K."/>
            <person name="Hu X."/>
            <person name="Khan A.S."/>
            <person name="Lane L."/>
            <person name="Tilahun Y."/>
            <person name="Wright H."/>
        </authorList>
    </citation>
    <scope>NUCLEOTIDE SEQUENCE [LARGE SCALE GENOMIC DNA]</scope>
</reference>
<reference key="11">
    <citation type="submission" date="2005-07" db="EMBL/GenBank/DDBJ databases">
        <authorList>
            <person name="Mural R.J."/>
            <person name="Istrail S."/>
            <person name="Sutton G.G."/>
            <person name="Florea L."/>
            <person name="Halpern A.L."/>
            <person name="Mobarry C.M."/>
            <person name="Lippert R."/>
            <person name="Walenz B."/>
            <person name="Shatkay H."/>
            <person name="Dew I."/>
            <person name="Miller J.R."/>
            <person name="Flanigan M.J."/>
            <person name="Edwards N.J."/>
            <person name="Bolanos R."/>
            <person name="Fasulo D."/>
            <person name="Halldorsson B.V."/>
            <person name="Hannenhalli S."/>
            <person name="Turner R."/>
            <person name="Yooseph S."/>
            <person name="Lu F."/>
            <person name="Nusskern D.R."/>
            <person name="Shue B.C."/>
            <person name="Zheng X.H."/>
            <person name="Zhong F."/>
            <person name="Delcher A.L."/>
            <person name="Huson D.H."/>
            <person name="Kravitz S.A."/>
            <person name="Mouchard L."/>
            <person name="Reinert K."/>
            <person name="Remington K.A."/>
            <person name="Clark A.G."/>
            <person name="Waterman M.S."/>
            <person name="Eichler E.E."/>
            <person name="Adams M.D."/>
            <person name="Hunkapiller M.W."/>
            <person name="Myers E.W."/>
            <person name="Venter J.C."/>
        </authorList>
    </citation>
    <scope>NUCLEOTIDE SEQUENCE [LARGE SCALE GENOMIC DNA]</scope>
</reference>
<reference key="12">
    <citation type="journal article" date="2004" name="Genome Res.">
        <title>The status, quality, and expansion of the NIH full-length cDNA project: the Mammalian Gene Collection (MGC).</title>
        <authorList>
            <consortium name="The MGC Project Team"/>
        </authorList>
    </citation>
    <scope>NUCLEOTIDE SEQUENCE [LARGE SCALE MRNA]</scope>
    <source>
        <tissue>Placenta</tissue>
        <tissue>Skin</tissue>
    </source>
</reference>
<reference key="13">
    <citation type="journal article" date="1988" name="J. Biochem.">
        <title>Complete amino acid sequence of a beta-galactoside-binding lectin from human placenta.</title>
        <authorList>
            <person name="Hirabayashi J."/>
            <person name="Kasai K."/>
        </authorList>
    </citation>
    <scope>PROTEIN SEQUENCE OF 2-135</scope>
    <source>
        <tissue>Placenta</tissue>
    </source>
</reference>
<reference key="14">
    <citation type="journal article" date="1991" name="Neurochem. Int.">
        <title>Beta-galactosidase soluble lectin from human brain: complete amino acid sequence.</title>
        <authorList>
            <person name="Bladier D."/>
            <person name="le Caer J.-P."/>
            <person name="Joubert R."/>
            <person name="Caron M."/>
            <person name="Rossier J."/>
        </authorList>
    </citation>
    <scope>PROTEIN SEQUENCE OF 2-135</scope>
    <source>
        <tissue>Brain</tissue>
    </source>
</reference>
<reference key="15">
    <citation type="journal article" date="2003" name="Nat. Biotechnol.">
        <title>Exploring proteomes and analyzing protein processing by mass spectrometric identification of sorted N-terminal peptides.</title>
        <authorList>
            <person name="Gevaert K."/>
            <person name="Goethals M."/>
            <person name="Martens L."/>
            <person name="Van Damme J."/>
            <person name="Staes A."/>
            <person name="Thomas G.R."/>
            <person name="Vandekerckhove J."/>
        </authorList>
    </citation>
    <scope>PROTEIN SEQUENCE OF 2-19</scope>
    <source>
        <tissue>Platelet</tissue>
    </source>
</reference>
<reference key="16">
    <citation type="submission" date="2008-12" db="UniProtKB">
        <authorList>
            <person name="Lubec G."/>
            <person name="Vishwanath V."/>
            <person name="Chen W.-Q."/>
            <person name="Sun Y."/>
        </authorList>
    </citation>
    <scope>PROTEIN SEQUENCE OF 38-49; 101-108 AND 113-128</scope>
    <scope>IDENTIFICATION BY MASS SPECTROMETRY</scope>
    <source>
        <tissue>Brain</tissue>
        <tissue>Cajal-Retzius cell</tissue>
        <tissue>Fetal brain cortex</tissue>
    </source>
</reference>
<reference key="17">
    <citation type="journal article" date="1987" name="J. Biochem.">
        <title>Further characterization and structural studies on human placenta lectin.</title>
        <authorList>
            <person name="Hirabayashi J."/>
            <person name="Kawasaki H."/>
            <person name="Suzuki K."/>
            <person name="Kasai K."/>
        </authorList>
    </citation>
    <scope>PROTEIN SEQUENCE OF 70-87 AND 122-133</scope>
    <source>
        <tissue>Placenta</tissue>
    </source>
</reference>
<reference key="18">
    <citation type="journal article" date="1992" name="Arch. Biochem. Biophys.">
        <title>Identification of a 14-kDa laminin binding protein (HLBP14) in human melanoma cells that is identical to the 14-kDa galactoside binding lectin.</title>
        <authorList>
            <person name="Castronovo V."/>
            <person name="Luyten F."/>
            <person name="van den Brule F."/>
            <person name="Sobel M.E."/>
        </authorList>
    </citation>
    <scope>PROTEIN SEQUENCE OF 20-29; 50-74 AND 132-135</scope>
    <scope>INTERACTION WITH LAMININ</scope>
    <source>
        <tissue>Melanoma</tissue>
    </source>
</reference>
<reference key="19">
    <citation type="journal article" date="1990" name="Biochemistry">
        <title>Human splenic galaptin: physicochemical characterization.</title>
        <authorList>
            <person name="Sharma A."/>
            <person name="Chemelli R."/>
            <person name="Allen H.J."/>
        </authorList>
    </citation>
    <scope>PARTIAL PROTEIN SEQUENCE</scope>
    <source>
        <tissue>Spleen</tissue>
    </source>
</reference>
<reference key="20">
    <citation type="journal article" date="1995" name="Nature">
        <title>Apoptosis of T cells mediated by galectin-1.</title>
        <authorList>
            <person name="Perillo N.L."/>
            <person name="Pace K.E."/>
            <person name="Seilhamer J.J."/>
            <person name="Baum L.G."/>
        </authorList>
    </citation>
    <scope>CHARACTERIZATION</scope>
</reference>
<reference key="21">
    <citation type="journal article" date="1999" name="Immunol. Lett.">
        <title>Galectin-1, a natural ligand for the receptor-type protein tyrosine phosphatase CD45.</title>
        <authorList>
            <person name="Walzel H."/>
            <person name="Schulz U."/>
            <person name="Neels P."/>
            <person name="Brock J."/>
        </authorList>
    </citation>
    <scope>CHARACTERIZATION</scope>
    <source>
        <tissue>Placenta</tissue>
    </source>
</reference>
<reference key="22">
    <citation type="journal article" date="2000" name="Glycobiology">
        <title>Regulation of CD45-induced signaling by galectin-1 in Burkitt lymphoma B cells.</title>
        <authorList>
            <person name="Fouillit M."/>
            <person name="Joubert-Caron R."/>
            <person name="Poirier F."/>
            <person name="Bourin P."/>
            <person name="Monostori E."/>
            <person name="Levi-Strauss M."/>
            <person name="Raphael M."/>
            <person name="Bladier D."/>
            <person name="Caron M."/>
        </authorList>
    </citation>
    <scope>CHARACTERIZATION</scope>
</reference>
<reference key="23">
    <citation type="journal article" date="2001" name="Int. J. Cancer">
        <title>Glycoprotein 90K/MAC-2BP interacts with galectin-1 and mediates galectin-1-induced cell aggregation.</title>
        <authorList>
            <person name="Tinari N."/>
            <person name="Kuwabara I."/>
            <person name="Huflejt M.E."/>
            <person name="Shen P.F."/>
            <person name="Iacobelli S."/>
            <person name="Liu F.-T."/>
        </authorList>
    </citation>
    <scope>INTERACTION WITH LGALS3BP</scope>
</reference>
<reference key="24">
    <citation type="journal article" date="2004" name="J. Biol. Chem.">
        <title>Presentation of galectin-1 by extracellular matrix triggers T cell death.</title>
        <authorList>
            <person name="He J."/>
            <person name="Baum L.G."/>
        </authorList>
    </citation>
    <scope>SUBCELLULAR LOCATION</scope>
    <scope>FUNCTION</scope>
</reference>
<reference key="25">
    <citation type="journal article" date="2008" name="Eur. J. Inflamm.">
        <title>Abnormal proteins in primary breast cancer tissues from 25 Sudanese patients.</title>
        <authorList>
            <person name="Ahamed M.E."/>
            <person name="Ahmed M.E."/>
            <person name="Eltoum A.M."/>
            <person name="Altahir G.O."/>
            <person name="Ahmed K.M."/>
            <person name="Harbi S.O."/>
            <person name="Stansalas J."/>
            <person name="Mohamed A.O."/>
        </authorList>
    </citation>
    <scope>IDENTIFICATION BY MASS SPECTROMETRY</scope>
    <source>
        <tissue>Mammary cancer</tissue>
    </source>
</reference>
<reference key="26">
    <citation type="journal article" date="2009" name="Proc. Natl. Acad. Sci. U.S.A.">
        <title>A primate subfamily of galectins expressed at the maternal-fetal interface that promote immune cell death.</title>
        <authorList>
            <person name="Than N.G."/>
            <person name="Romero R."/>
            <person name="Goodman M."/>
            <person name="Weckle A."/>
            <person name="Xing J."/>
            <person name="Dong Z."/>
            <person name="Xu Y."/>
            <person name="Tarquini F."/>
            <person name="Szilagyi A."/>
            <person name="Gal P."/>
            <person name="Hou Z."/>
            <person name="Tarca A.L."/>
            <person name="Kim C.J."/>
            <person name="Kim J.S."/>
            <person name="Haidarian S."/>
            <person name="Uddin M."/>
            <person name="Bohn H."/>
            <person name="Benirschke K."/>
            <person name="Santolaya-Forgas J."/>
            <person name="Grossman L.I."/>
            <person name="Erez O."/>
            <person name="Hassan S.S."/>
            <person name="Zavodszky P."/>
            <person name="Papp Z."/>
            <person name="Wildman D.E."/>
        </authorList>
    </citation>
    <scope>FUNCTION</scope>
    <scope>TISSUE SPECIFICITY</scope>
</reference>
<reference key="27">
    <citation type="journal article" date="2009" name="Science">
        <title>Lysine acetylation targets protein complexes and co-regulates major cellular functions.</title>
        <authorList>
            <person name="Choudhary C."/>
            <person name="Kumar C."/>
            <person name="Gnad F."/>
            <person name="Nielsen M.L."/>
            <person name="Rehman M."/>
            <person name="Walther T.C."/>
            <person name="Olsen J.V."/>
            <person name="Mann M."/>
        </authorList>
    </citation>
    <scope>ACETYLATION [LARGE SCALE ANALYSIS] AT LYS-29</scope>
    <scope>IDENTIFICATION BY MASS SPECTROMETRY [LARGE SCALE ANALYSIS]</scope>
</reference>
<reference key="28">
    <citation type="journal article" date="2011" name="BMC Syst. Biol.">
        <title>Initial characterization of the human central proteome.</title>
        <authorList>
            <person name="Burkard T.R."/>
            <person name="Planyavsky M."/>
            <person name="Kaupe I."/>
            <person name="Breitwieser F.P."/>
            <person name="Buerckstuemmer T."/>
            <person name="Bennett K.L."/>
            <person name="Superti-Furga G."/>
            <person name="Colinge J."/>
        </authorList>
    </citation>
    <scope>IDENTIFICATION BY MASS SPECTROMETRY [LARGE SCALE ANALYSIS]</scope>
</reference>
<reference key="29">
    <citation type="journal article" date="2012" name="J. Proteome Res.">
        <title>Resveratrol-induced changes of the human adipocyte secretion profile.</title>
        <authorList>
            <person name="Rosenow A."/>
            <person name="Noben J.P."/>
            <person name="Jocken J."/>
            <person name="Kallendrusch S."/>
            <person name="Fischer-Posovszky P."/>
            <person name="Mariman E.C."/>
            <person name="Renes J."/>
        </authorList>
    </citation>
    <scope>IDENTIFICATION BY MASS SPECTROMETRY [LARGE SCALE ANALYSIS]</scope>
</reference>
<reference key="30">
    <citation type="journal article" date="2012" name="Mol. Cell. Proteomics">
        <title>Comparative large-scale characterisation of plant vs. mammal proteins reveals similar and idiosyncratic N-alpha acetylation features.</title>
        <authorList>
            <person name="Bienvenut W.V."/>
            <person name="Sumpton D."/>
            <person name="Martinez A."/>
            <person name="Lilla S."/>
            <person name="Espagne C."/>
            <person name="Meinnel T."/>
            <person name="Giglione C."/>
        </authorList>
    </citation>
    <scope>ACETYLATION [LARGE SCALE ANALYSIS] AT ALA-2</scope>
    <scope>CLEAVAGE OF INITIATOR METHIONINE [LARGE SCALE ANALYSIS]</scope>
    <scope>IDENTIFICATION BY MASS SPECTROMETRY [LARGE SCALE ANALYSIS]</scope>
</reference>
<reference key="31">
    <citation type="journal article" date="2012" name="Proc. Natl. Acad. Sci. U.S.A.">
        <title>N-terminal acetylome analyses and functional insights of the N-terminal acetyltransferase NatB.</title>
        <authorList>
            <person name="Van Damme P."/>
            <person name="Lasa M."/>
            <person name="Polevoda B."/>
            <person name="Gazquez C."/>
            <person name="Elosegui-Artola A."/>
            <person name="Kim D.S."/>
            <person name="De Juan-Pardo E."/>
            <person name="Demeyer K."/>
            <person name="Hole K."/>
            <person name="Larrea E."/>
            <person name="Timmerman E."/>
            <person name="Prieto J."/>
            <person name="Arnesen T."/>
            <person name="Sherman F."/>
            <person name="Gevaert K."/>
            <person name="Aldabe R."/>
        </authorList>
    </citation>
    <scope>ACETYLATION [LARGE SCALE ANALYSIS] AT ALA-2</scope>
    <scope>CLEAVAGE OF INITIATOR METHIONINE [LARGE SCALE ANALYSIS]</scope>
    <scope>IDENTIFICATION BY MASS SPECTROMETRY [LARGE SCALE ANALYSIS]</scope>
</reference>
<reference key="32">
    <citation type="journal article" date="2013" name="Mol. Cancer Res.">
        <title>Multiple functions of sushi domain containing 2 (SUSD2) in breast tumorigenesis.</title>
        <authorList>
            <person name="Watson A.P."/>
            <person name="Evans R.L."/>
            <person name="Egland K.A."/>
        </authorList>
    </citation>
    <scope>INTERACTION WITH SUSD2</scope>
</reference>
<reference key="33">
    <citation type="journal article" date="2014" name="FEBS Lett.">
        <title>Modulation of CD6 function through interaction with galectin-1 and -3.</title>
        <authorList>
            <person name="Escoda-Ferran C."/>
            <person name="Carrasco E."/>
            <person name="Caballero-Banos M."/>
            <person name="Miro-Julia C."/>
            <person name="Martinez-Florensa M."/>
            <person name="Consuegra-Fernandez M."/>
            <person name="Martinez V.G."/>
            <person name="Liu F.T."/>
            <person name="Lozano F."/>
        </authorList>
    </citation>
    <scope>INTERACTION WITH CD6 AND ALCAM</scope>
    <scope>FUNCTION</scope>
</reference>
<reference key="34">
    <citation type="journal article" date="2014" name="J. Proteomics">
        <title>An enzyme assisted RP-RPLC approach for in-depth analysis of human liver phosphoproteome.</title>
        <authorList>
            <person name="Bian Y."/>
            <person name="Song C."/>
            <person name="Cheng K."/>
            <person name="Dong M."/>
            <person name="Wang F."/>
            <person name="Huang J."/>
            <person name="Sun D."/>
            <person name="Wang L."/>
            <person name="Ye M."/>
            <person name="Zou H."/>
        </authorList>
    </citation>
    <scope>IDENTIFICATION BY MASS SPECTROMETRY [LARGE SCALE ANALYSIS]</scope>
    <source>
        <tissue>Liver</tissue>
    </source>
</reference>
<reference key="35">
    <citation type="journal article" date="2014" name="Mol. Cell. Biol.">
        <title>The leukocyte activation receptor CD69 controls T cell differentiation through its interaction with galectin-1.</title>
        <authorList>
            <person name="de la Fuente H."/>
            <person name="Cruz-Adalia A."/>
            <person name="Martinez Del Hoyo G."/>
            <person name="Cibrian-Vera D."/>
            <person name="Bonay P."/>
            <person name="Perez-Hernandez D."/>
            <person name="Vazquez J."/>
            <person name="Navarro P."/>
            <person name="Gutierrez-Gallego R."/>
            <person name="Ramirez-Huesca M."/>
            <person name="Martin P."/>
            <person name="Sanchez-Madrid F."/>
        </authorList>
    </citation>
    <scope>FUNCTION</scope>
    <scope>INTERACTION WITH CD69</scope>
</reference>
<reference key="36">
    <citation type="journal article" date="2015" name="Cell">
        <title>A single kinase generates the majority of the secreted phosphoproteome.</title>
        <authorList>
            <person name="Tagliabracci V.S."/>
            <person name="Wiley S.E."/>
            <person name="Guo X."/>
            <person name="Kinch L.N."/>
            <person name="Durrant E."/>
            <person name="Wen J."/>
            <person name="Xiao J."/>
            <person name="Cui J."/>
            <person name="Nguyen K.B."/>
            <person name="Engel J.L."/>
            <person name="Coon J.J."/>
            <person name="Grishin N."/>
            <person name="Pinna L.A."/>
            <person name="Pagliarini D.J."/>
            <person name="Dixon J.E."/>
        </authorList>
    </citation>
    <scope>PHOSPHORYLATION AT SER-30</scope>
</reference>
<reference key="37">
    <citation type="journal article" date="2015" name="Proteomics">
        <title>N-terminome analysis of the human mitochondrial proteome.</title>
        <authorList>
            <person name="Vaca Jacome A.S."/>
            <person name="Rabilloud T."/>
            <person name="Schaeffer-Reiss C."/>
            <person name="Rompais M."/>
            <person name="Ayoub D."/>
            <person name="Lane L."/>
            <person name="Bairoch A."/>
            <person name="Van Dorsselaer A."/>
            <person name="Carapito C."/>
        </authorList>
    </citation>
    <scope>ACETYLATION [LARGE SCALE ANALYSIS] AT ALA-2</scope>
    <scope>CLEAVAGE OF INITIATOR METHIONINE [LARGE SCALE ANALYSIS]</scope>
    <scope>IDENTIFICATION BY MASS SPECTROMETRY [LARGE SCALE ANALYSIS]</scope>
</reference>
<reference key="38">
    <citation type="journal article" date="2020" name="Cell">
        <title>A Translocation Pathway for Vesicle-Mediated Unconventional Protein Secretion.</title>
        <authorList>
            <person name="Zhang M."/>
            <person name="Liu L."/>
            <person name="Lin X."/>
            <person name="Wang Y."/>
            <person name="Li Y."/>
            <person name="Guo Q."/>
            <person name="Li S."/>
            <person name="Sun Y."/>
            <person name="Tao X."/>
            <person name="Zhang D."/>
            <person name="Lv X."/>
            <person name="Zheng L."/>
            <person name="Ge L."/>
        </authorList>
    </citation>
    <scope>SUBCELLULAR LOCATION</scope>
    <scope>INTERACTION WITH TMED10</scope>
</reference>
<reference key="39">
    <citation type="journal article" date="2004" name="J. Mol. Biol.">
        <title>Growth-regulatory human galectin-1: crystallographic characterisation of the structural changes induced by single-site mutations and their impact on the thermodynamics of ligand binding.</title>
        <authorList>
            <person name="Lopez-Lucendo M.F."/>
            <person name="Solis D."/>
            <person name="Andre S."/>
            <person name="Hirabayashi J."/>
            <person name="Kasai K."/>
            <person name="Kaltner H."/>
            <person name="Gabius H.-J."/>
            <person name="Romero A."/>
        </authorList>
    </citation>
    <scope>X-RAY CRYSTALLOGRAPHY (1.7 ANGSTROMS) IN COMPLEX WITH CARBOHYDRATE</scope>
    <scope>SUBUNIT</scope>
</reference>
<reference key="40">
    <citation type="journal article" date="2008" name="Glycobiology">
        <title>Functional and structural bases of a cysteine-less mutant as a long-lasting substitute for galectin-1.</title>
        <authorList>
            <person name="Nishi N."/>
            <person name="Abe A."/>
            <person name="Iwaki J."/>
            <person name="Yoshida H."/>
            <person name="Itoh A."/>
            <person name="Shoji H."/>
            <person name="Kamitori S."/>
            <person name="Hirabayashi J."/>
            <person name="Nakamura T."/>
        </authorList>
    </citation>
    <scope>X-RAY CRYSTALLOGRAPHY (1.86 ANGSTROMS) OF 2-135 IN COMPLEX WITH LACTOSE</scope>
    <scope>INTERACTION WITH CD2; CD3; CD7; CD43 AND CD45</scope>
    <scope>SUBUNIT</scope>
    <scope>FUNCTION</scope>
</reference>
<reference key="41">
    <citation type="journal article" date="2009" name="Biochemistry">
        <title>Critical role of the solvent environment in galectin-1 binding to the disaccharide lactose.</title>
        <authorList>
            <person name="Di Lella S."/>
            <person name="Ma L."/>
            <person name="Ricci J.C."/>
            <person name="Rabinovich G.A."/>
            <person name="Asher S.A."/>
            <person name="Alvarez R.M.S."/>
        </authorList>
    </citation>
    <scope>X-RAY CRYSTALLOGRAPHY (1.65 ANGSTROMS)</scope>
</reference>
<gene>
    <name evidence="18" type="primary">LGALS1</name>
</gene>
<name>LEG1_HUMAN</name>